<sequence length="523" mass="57431">MSQQVIIFDTTLRDGEQALQASLSAKEKLQIALALERMGVDVMEVGFPVSSPGDFESVQTIARTIKNSRVCALARCVEKDIDVAAQALKVADAFRIHTFIATSPMHIATKLRSTLDEVIERAVYMVKRARNYTDDVEFSCEDAGRTPVDDLARVVEAAINAGARTINIPDTVGYTMPFEFAGIISGLYERVPNIDKAIISVHTHDDLGIAVGNSLAAVHAGARQVEGAMNGIGERAGNCALEEVIMAIKVRKDIMNVHTNINHHEIWRTSQTVSQICNMPIPANKAIVGSGAFAHSSGIHQDGVLKNRENYEIMTPESIGLNQIQLNLTSRSGRAAVKHRMEEMGYKDTDYNMDHLYDAFLKLADKKGQVFDYDLEALAFINKQQEEPEHFRLDYFSVQSGSSDIATASVKLACGEEIKAEAANGNGPVDAIYQAINRITGYDVELVKYDLNAKGQGKDALGQVDIVVNHHGRRFHGVGLATDIVESSAKAMVHVLNNIWRAAEVEKELQRKAQNKENNKETV</sequence>
<proteinExistence type="inferred from homology"/>
<keyword id="KW-0028">Amino-acid biosynthesis</keyword>
<keyword id="KW-0100">Branched-chain amino acid biosynthesis</keyword>
<keyword id="KW-0963">Cytoplasm</keyword>
<keyword id="KW-0432">Leucine biosynthesis</keyword>
<keyword id="KW-0464">Manganese</keyword>
<keyword id="KW-0479">Metal-binding</keyword>
<keyword id="KW-0808">Transferase</keyword>
<evidence type="ECO:0000255" key="1">
    <source>
        <dbReference type="HAMAP-Rule" id="MF_01025"/>
    </source>
</evidence>
<organism>
    <name type="scientific">Salmonella enteritidis PT4 (strain P125109)</name>
    <dbReference type="NCBI Taxonomy" id="550537"/>
    <lineage>
        <taxon>Bacteria</taxon>
        <taxon>Pseudomonadati</taxon>
        <taxon>Pseudomonadota</taxon>
        <taxon>Gammaproteobacteria</taxon>
        <taxon>Enterobacterales</taxon>
        <taxon>Enterobacteriaceae</taxon>
        <taxon>Salmonella</taxon>
    </lineage>
</organism>
<protein>
    <recommendedName>
        <fullName evidence="1">2-isopropylmalate synthase</fullName>
        <ecNumber evidence="1">2.3.3.13</ecNumber>
    </recommendedName>
    <alternativeName>
        <fullName evidence="1">Alpha-IPM synthase</fullName>
    </alternativeName>
    <alternativeName>
        <fullName evidence="1">Alpha-isopropylmalate synthase</fullName>
    </alternativeName>
</protein>
<dbReference type="EC" id="2.3.3.13" evidence="1"/>
<dbReference type="EMBL" id="AM933172">
    <property type="protein sequence ID" value="CAR31703.1"/>
    <property type="molecule type" value="Genomic_DNA"/>
</dbReference>
<dbReference type="RefSeq" id="WP_000082819.1">
    <property type="nucleotide sequence ID" value="NC_011294.1"/>
</dbReference>
<dbReference type="SMR" id="B5R2K9"/>
<dbReference type="KEGG" id="set:SEN0114"/>
<dbReference type="HOGENOM" id="CLU_022158_0_1_6"/>
<dbReference type="UniPathway" id="UPA00048">
    <property type="reaction ID" value="UER00070"/>
</dbReference>
<dbReference type="Proteomes" id="UP000000613">
    <property type="component" value="Chromosome"/>
</dbReference>
<dbReference type="GO" id="GO:0005829">
    <property type="term" value="C:cytosol"/>
    <property type="evidence" value="ECO:0007669"/>
    <property type="project" value="TreeGrafter"/>
</dbReference>
<dbReference type="GO" id="GO:0003852">
    <property type="term" value="F:2-isopropylmalate synthase activity"/>
    <property type="evidence" value="ECO:0007669"/>
    <property type="project" value="UniProtKB-UniRule"/>
</dbReference>
<dbReference type="GO" id="GO:0003985">
    <property type="term" value="F:acetyl-CoA C-acetyltransferase activity"/>
    <property type="evidence" value="ECO:0007669"/>
    <property type="project" value="UniProtKB-UniRule"/>
</dbReference>
<dbReference type="GO" id="GO:0030145">
    <property type="term" value="F:manganese ion binding"/>
    <property type="evidence" value="ECO:0007669"/>
    <property type="project" value="UniProtKB-UniRule"/>
</dbReference>
<dbReference type="GO" id="GO:0009098">
    <property type="term" value="P:L-leucine biosynthetic process"/>
    <property type="evidence" value="ECO:0007669"/>
    <property type="project" value="UniProtKB-UniRule"/>
</dbReference>
<dbReference type="CDD" id="cd07940">
    <property type="entry name" value="DRE_TIM_IPMS"/>
    <property type="match status" value="1"/>
</dbReference>
<dbReference type="FunFam" id="1.10.238.260:FF:000001">
    <property type="entry name" value="2-isopropylmalate synthase"/>
    <property type="match status" value="1"/>
</dbReference>
<dbReference type="FunFam" id="3.20.20.70:FF:000010">
    <property type="entry name" value="2-isopropylmalate synthase"/>
    <property type="match status" value="1"/>
</dbReference>
<dbReference type="FunFam" id="3.30.160.270:FF:000001">
    <property type="entry name" value="2-isopropylmalate synthase"/>
    <property type="match status" value="1"/>
</dbReference>
<dbReference type="Gene3D" id="1.10.238.260">
    <property type="match status" value="1"/>
</dbReference>
<dbReference type="Gene3D" id="3.30.160.270">
    <property type="match status" value="1"/>
</dbReference>
<dbReference type="Gene3D" id="3.20.20.70">
    <property type="entry name" value="Aldolase class I"/>
    <property type="match status" value="1"/>
</dbReference>
<dbReference type="HAMAP" id="MF_01025">
    <property type="entry name" value="LeuA_type1"/>
    <property type="match status" value="1"/>
</dbReference>
<dbReference type="InterPro" id="IPR050073">
    <property type="entry name" value="2-IPM_HCS-like"/>
</dbReference>
<dbReference type="InterPro" id="IPR013709">
    <property type="entry name" value="2-isopropylmalate_synth_dimer"/>
</dbReference>
<dbReference type="InterPro" id="IPR002034">
    <property type="entry name" value="AIPM/Hcit_synth_CS"/>
</dbReference>
<dbReference type="InterPro" id="IPR013785">
    <property type="entry name" value="Aldolase_TIM"/>
</dbReference>
<dbReference type="InterPro" id="IPR054691">
    <property type="entry name" value="LeuA/HCS_post-cat"/>
</dbReference>
<dbReference type="InterPro" id="IPR036230">
    <property type="entry name" value="LeuA_allosteric_dom_sf"/>
</dbReference>
<dbReference type="InterPro" id="IPR005671">
    <property type="entry name" value="LeuA_bact_synth"/>
</dbReference>
<dbReference type="InterPro" id="IPR000891">
    <property type="entry name" value="PYR_CT"/>
</dbReference>
<dbReference type="NCBIfam" id="TIGR00973">
    <property type="entry name" value="leuA_bact"/>
    <property type="match status" value="1"/>
</dbReference>
<dbReference type="NCBIfam" id="NF002084">
    <property type="entry name" value="PRK00915.1-1"/>
    <property type="match status" value="1"/>
</dbReference>
<dbReference type="NCBIfam" id="NF002086">
    <property type="entry name" value="PRK00915.1-3"/>
    <property type="match status" value="1"/>
</dbReference>
<dbReference type="PANTHER" id="PTHR10277:SF9">
    <property type="entry name" value="2-ISOPROPYLMALATE SYNTHASE 1, CHLOROPLASTIC-RELATED"/>
    <property type="match status" value="1"/>
</dbReference>
<dbReference type="PANTHER" id="PTHR10277">
    <property type="entry name" value="HOMOCITRATE SYNTHASE-RELATED"/>
    <property type="match status" value="1"/>
</dbReference>
<dbReference type="Pfam" id="PF22617">
    <property type="entry name" value="HCS_D2"/>
    <property type="match status" value="1"/>
</dbReference>
<dbReference type="Pfam" id="PF00682">
    <property type="entry name" value="HMGL-like"/>
    <property type="match status" value="1"/>
</dbReference>
<dbReference type="Pfam" id="PF08502">
    <property type="entry name" value="LeuA_dimer"/>
    <property type="match status" value="1"/>
</dbReference>
<dbReference type="SMART" id="SM00917">
    <property type="entry name" value="LeuA_dimer"/>
    <property type="match status" value="1"/>
</dbReference>
<dbReference type="SUPFAM" id="SSF110921">
    <property type="entry name" value="2-isopropylmalate synthase LeuA, allosteric (dimerisation) domain"/>
    <property type="match status" value="1"/>
</dbReference>
<dbReference type="SUPFAM" id="SSF51569">
    <property type="entry name" value="Aldolase"/>
    <property type="match status" value="1"/>
</dbReference>
<dbReference type="PROSITE" id="PS00815">
    <property type="entry name" value="AIPM_HOMOCIT_SYNTH_1"/>
    <property type="match status" value="1"/>
</dbReference>
<dbReference type="PROSITE" id="PS00816">
    <property type="entry name" value="AIPM_HOMOCIT_SYNTH_2"/>
    <property type="match status" value="1"/>
</dbReference>
<dbReference type="PROSITE" id="PS50991">
    <property type="entry name" value="PYR_CT"/>
    <property type="match status" value="1"/>
</dbReference>
<reference key="1">
    <citation type="journal article" date="2008" name="Genome Res.">
        <title>Comparative genome analysis of Salmonella enteritidis PT4 and Salmonella gallinarum 287/91 provides insights into evolutionary and host adaptation pathways.</title>
        <authorList>
            <person name="Thomson N.R."/>
            <person name="Clayton D.J."/>
            <person name="Windhorst D."/>
            <person name="Vernikos G."/>
            <person name="Davidson S."/>
            <person name="Churcher C."/>
            <person name="Quail M.A."/>
            <person name="Stevens M."/>
            <person name="Jones M.A."/>
            <person name="Watson M."/>
            <person name="Barron A."/>
            <person name="Layton A."/>
            <person name="Pickard D."/>
            <person name="Kingsley R.A."/>
            <person name="Bignell A."/>
            <person name="Clark L."/>
            <person name="Harris B."/>
            <person name="Ormond D."/>
            <person name="Abdellah Z."/>
            <person name="Brooks K."/>
            <person name="Cherevach I."/>
            <person name="Chillingworth T."/>
            <person name="Woodward J."/>
            <person name="Norberczak H."/>
            <person name="Lord A."/>
            <person name="Arrowsmith C."/>
            <person name="Jagels K."/>
            <person name="Moule S."/>
            <person name="Mungall K."/>
            <person name="Saunders M."/>
            <person name="Whitehead S."/>
            <person name="Chabalgoity J.A."/>
            <person name="Maskell D."/>
            <person name="Humphreys T."/>
            <person name="Roberts M."/>
            <person name="Barrow P.A."/>
            <person name="Dougan G."/>
            <person name="Parkhill J."/>
        </authorList>
    </citation>
    <scope>NUCLEOTIDE SEQUENCE [LARGE SCALE GENOMIC DNA]</scope>
    <source>
        <strain>P125109</strain>
    </source>
</reference>
<accession>B5R2K9</accession>
<comment type="function">
    <text evidence="1">Catalyzes the condensation of the acetyl group of acetyl-CoA with 3-methyl-2-oxobutanoate (2-ketoisovalerate) to form 3-carboxy-3-hydroxy-4-methylpentanoate (2-isopropylmalate).</text>
</comment>
<comment type="catalytic activity">
    <reaction evidence="1">
        <text>3-methyl-2-oxobutanoate + acetyl-CoA + H2O = (2S)-2-isopropylmalate + CoA + H(+)</text>
        <dbReference type="Rhea" id="RHEA:21524"/>
        <dbReference type="ChEBI" id="CHEBI:1178"/>
        <dbReference type="ChEBI" id="CHEBI:11851"/>
        <dbReference type="ChEBI" id="CHEBI:15377"/>
        <dbReference type="ChEBI" id="CHEBI:15378"/>
        <dbReference type="ChEBI" id="CHEBI:57287"/>
        <dbReference type="ChEBI" id="CHEBI:57288"/>
        <dbReference type="EC" id="2.3.3.13"/>
    </reaction>
</comment>
<comment type="cofactor">
    <cofactor evidence="1">
        <name>Mn(2+)</name>
        <dbReference type="ChEBI" id="CHEBI:29035"/>
    </cofactor>
</comment>
<comment type="pathway">
    <text evidence="1">Amino-acid biosynthesis; L-leucine biosynthesis; L-leucine from 3-methyl-2-oxobutanoate: step 1/4.</text>
</comment>
<comment type="subunit">
    <text evidence="1">Homodimer.</text>
</comment>
<comment type="subcellular location">
    <subcellularLocation>
        <location evidence="1">Cytoplasm</location>
    </subcellularLocation>
</comment>
<comment type="similarity">
    <text evidence="1">Belongs to the alpha-IPM synthase/homocitrate synthase family. LeuA type 1 subfamily.</text>
</comment>
<gene>
    <name evidence="1" type="primary">leuA</name>
    <name type="ordered locus">SEN0114</name>
</gene>
<feature type="chain" id="PRO_1000149267" description="2-isopropylmalate synthase">
    <location>
        <begin position="1"/>
        <end position="523"/>
    </location>
</feature>
<feature type="domain" description="Pyruvate carboxyltransferase" evidence="1">
    <location>
        <begin position="5"/>
        <end position="267"/>
    </location>
</feature>
<feature type="region of interest" description="Regulatory domain" evidence="1">
    <location>
        <begin position="392"/>
        <end position="523"/>
    </location>
</feature>
<feature type="binding site" evidence="1">
    <location>
        <position position="14"/>
    </location>
    <ligand>
        <name>Mn(2+)</name>
        <dbReference type="ChEBI" id="CHEBI:29035"/>
    </ligand>
</feature>
<feature type="binding site" evidence="1">
    <location>
        <position position="202"/>
    </location>
    <ligand>
        <name>Mn(2+)</name>
        <dbReference type="ChEBI" id="CHEBI:29035"/>
    </ligand>
</feature>
<feature type="binding site" evidence="1">
    <location>
        <position position="204"/>
    </location>
    <ligand>
        <name>Mn(2+)</name>
        <dbReference type="ChEBI" id="CHEBI:29035"/>
    </ligand>
</feature>
<feature type="binding site" evidence="1">
    <location>
        <position position="238"/>
    </location>
    <ligand>
        <name>Mn(2+)</name>
        <dbReference type="ChEBI" id="CHEBI:29035"/>
    </ligand>
</feature>
<name>LEU1_SALEP</name>